<keyword id="KW-0021">Allosteric enzyme</keyword>
<keyword id="KW-0024">Alternative initiation</keyword>
<keyword id="KW-0025">Alternative splicing</keyword>
<keyword id="KW-0067">ATP-binding</keyword>
<keyword id="KW-0963">Cytoplasm</keyword>
<keyword id="KW-0903">Direct protein sequencing</keyword>
<keyword id="KW-0324">Glycolysis</keyword>
<keyword id="KW-0391">Immunity</keyword>
<keyword id="KW-0395">Inflammatory response</keyword>
<keyword id="KW-0399">Innate immunity</keyword>
<keyword id="KW-0418">Kinase</keyword>
<keyword id="KW-0472">Membrane</keyword>
<keyword id="KW-0496">Mitochondrion</keyword>
<keyword id="KW-1000">Mitochondrion outer membrane</keyword>
<keyword id="KW-0547">Nucleotide-binding</keyword>
<keyword id="KW-0597">Phosphoprotein</keyword>
<keyword id="KW-1185">Reference proteome</keyword>
<keyword id="KW-0677">Repeat</keyword>
<keyword id="KW-0808">Transferase</keyword>
<proteinExistence type="evidence at protein level"/>
<comment type="function">
    <text evidence="1 2 8">Catalyzes the phosphorylation of various hexoses, such as D-glucose, D-glucosamine, D-fructose, D-mannose and 2-deoxy-D-glucose, to hexose 6-phosphate (D-glucose 6-phosphate, D-glucosamine 6-phosphate, D-fructose 6-phosphate, D-mannose 6-phosphate and 2-deoxy-D-glucose 6-phosphate, respectively). Does not phosphorylate N-acetyl-D-glucosamine (By similarity). Mediates the initial step of glycolysis by catalyzing phosphorylation of D-glucose to D-glucose 6-phosphate (By similarity). Involved in innate immunity and inflammation by acting as a pattern recognition receptor for bacterial peptidoglycan. When released in the cytosol, N-acetyl-D-glucosamine component of bacterial peptidoglycan inhibits the hexokinase activity of HK1 and causes its dissociation from mitochondrial outer membrane, thereby activating the NLRP3 inflammasome (PubMed:27374331).</text>
</comment>
<comment type="catalytic activity">
    <reaction evidence="2">
        <text>a D-hexose + ATP = a D-hexose 6-phosphate + ADP + H(+)</text>
        <dbReference type="Rhea" id="RHEA:22740"/>
        <dbReference type="ChEBI" id="CHEBI:4194"/>
        <dbReference type="ChEBI" id="CHEBI:15378"/>
        <dbReference type="ChEBI" id="CHEBI:30616"/>
        <dbReference type="ChEBI" id="CHEBI:229467"/>
        <dbReference type="ChEBI" id="CHEBI:456216"/>
        <dbReference type="EC" id="2.7.1.1"/>
    </reaction>
    <physiologicalReaction direction="left-to-right" evidence="2">
        <dbReference type="Rhea" id="RHEA:22741"/>
    </physiologicalReaction>
</comment>
<comment type="catalytic activity">
    <reaction evidence="1">
        <text>D-fructose + ATP = D-fructose 6-phosphate + ADP + H(+)</text>
        <dbReference type="Rhea" id="RHEA:16125"/>
        <dbReference type="ChEBI" id="CHEBI:15378"/>
        <dbReference type="ChEBI" id="CHEBI:30616"/>
        <dbReference type="ChEBI" id="CHEBI:37721"/>
        <dbReference type="ChEBI" id="CHEBI:61527"/>
        <dbReference type="ChEBI" id="CHEBI:456216"/>
        <dbReference type="EC" id="2.7.1.1"/>
    </reaction>
    <physiologicalReaction direction="left-to-right" evidence="1">
        <dbReference type="Rhea" id="RHEA:16126"/>
    </physiologicalReaction>
</comment>
<comment type="catalytic activity">
    <reaction evidence="1">
        <text>D-glucose + ATP = D-glucose 6-phosphate + ADP + H(+)</text>
        <dbReference type="Rhea" id="RHEA:17825"/>
        <dbReference type="ChEBI" id="CHEBI:4167"/>
        <dbReference type="ChEBI" id="CHEBI:15378"/>
        <dbReference type="ChEBI" id="CHEBI:30616"/>
        <dbReference type="ChEBI" id="CHEBI:61548"/>
        <dbReference type="ChEBI" id="CHEBI:456216"/>
        <dbReference type="EC" id="2.7.1.1"/>
    </reaction>
    <physiologicalReaction direction="left-to-right" evidence="1">
        <dbReference type="Rhea" id="RHEA:17826"/>
    </physiologicalReaction>
</comment>
<comment type="catalytic activity">
    <reaction evidence="1">
        <text>D-mannose + ATP = D-mannose 6-phosphate + ADP + H(+)</text>
        <dbReference type="Rhea" id="RHEA:11028"/>
        <dbReference type="ChEBI" id="CHEBI:4208"/>
        <dbReference type="ChEBI" id="CHEBI:15378"/>
        <dbReference type="ChEBI" id="CHEBI:30616"/>
        <dbReference type="ChEBI" id="CHEBI:58735"/>
        <dbReference type="ChEBI" id="CHEBI:456216"/>
        <dbReference type="EC" id="2.7.1.1"/>
    </reaction>
    <physiologicalReaction direction="left-to-right" evidence="1">
        <dbReference type="Rhea" id="RHEA:11029"/>
    </physiologicalReaction>
</comment>
<comment type="catalytic activity">
    <reaction evidence="2">
        <text>D-glucosamine + ATP = D-glucosamine 6-phosphate + ADP + H(+)</text>
        <dbReference type="Rhea" id="RHEA:10948"/>
        <dbReference type="ChEBI" id="CHEBI:15378"/>
        <dbReference type="ChEBI" id="CHEBI:30616"/>
        <dbReference type="ChEBI" id="CHEBI:58723"/>
        <dbReference type="ChEBI" id="CHEBI:58725"/>
        <dbReference type="ChEBI" id="CHEBI:456216"/>
        <dbReference type="EC" id="2.7.1.1"/>
    </reaction>
    <physiologicalReaction direction="left-to-right" evidence="2">
        <dbReference type="Rhea" id="RHEA:10949"/>
    </physiologicalReaction>
</comment>
<comment type="activity regulation">
    <text evidence="2">Hexokinase is an allosteric enzyme inhibited by its product D-glucose 6-phosphate. Hexokinase activity is inhibited by N-acetyl-D-glucosamine.</text>
</comment>
<comment type="pathway">
    <text evidence="2">Carbohydrate metabolism; hexose metabolism.</text>
</comment>
<comment type="pathway">
    <text evidence="1">Carbohydrate degradation; glycolysis; D-glyceraldehyde 3-phosphate and glycerone phosphate from D-glucose: step 1/4.</text>
</comment>
<comment type="subunit">
    <text evidence="2 6 7">Monomer (By similarity). Interacts with RABL2/RABL2A; binds preferentially to GTP-bound RABL2 (PubMed:23055941). Interacts with VDAC1. The HK1-VDAC1 complex interacts with ATF2 (By similarity). Interacts (via N-terminal spermatogenic cell-specific region) with PFKM isoform 2 and isoform 3 (via C-terminus) (PubMed:19889946). Interacts with SMAD5 (By similarity).</text>
</comment>
<comment type="subcellular location">
    <subcellularLocation>
        <location evidence="8">Mitochondrion outer membrane</location>
        <topology evidence="2">Peripheral membrane protein</topology>
    </subcellularLocation>
    <subcellularLocation>
        <location evidence="8">Cytoplasm</location>
        <location evidence="8">Cytosol</location>
    </subcellularLocation>
    <text evidence="2 8">The mitochondrial-binding peptide (MBP) region promotes association with the mitochondrial outer membrane (By similarity). Dissociates from the mitochondrial outer membrane following inhibition by N-acetyl-D-glucosamine, leading to relocation to the cytosol (PubMed:27374331).</text>
</comment>
<comment type="subcellular location">
    <molecule>Isoform HK1</molecule>
    <subcellularLocation>
        <location evidence="10">Mitochondrion outer membrane</location>
        <topology evidence="10">Peripheral membrane protein</topology>
    </subcellularLocation>
</comment>
<comment type="subcellular location">
    <molecule>Isoform HK1-SC</molecule>
    <subcellularLocation>
        <location evidence="10">Membrane</location>
    </subcellularLocation>
    <text evidence="10">Isoform HK1-SC is an integral membrane protein.</text>
</comment>
<comment type="alternative products">
    <event type="alternative splicing"/>
    <event type="alternative initiation"/>
    <isoform>
        <id>P17710-1</id>
        <name evidence="12">HK1-SA</name>
        <sequence type="displayed"/>
    </isoform>
    <isoform>
        <id>P17710-2</id>
        <name evidence="12">HK1-SB</name>
        <sequence type="described" ref="VSP_018747 VSP_007328"/>
    </isoform>
    <isoform>
        <id>P17710-3</id>
        <name>HK1</name>
        <sequence type="described" ref="VSP_007327"/>
    </isoform>
    <isoform>
        <id>P17710-4</id>
        <name evidence="12">HK1-SC</name>
        <sequence type="described" ref="VSP_018747"/>
    </isoform>
</comment>
<comment type="tissue specificity">
    <text evidence="7">In rapidly growing tumor cells exhibiting high glucose catabolic rates, isoform HK1 is markedly elevated. Isoform HK1-SA, isoform HK1-SB and isoform HK1-SC are found only in spermatogenic cells. Isoform HK1-SC is detected in round spermatids, condensing spermatids and mature sperm where it is found in the head membranes, mitochondria of the midpiece and the fibrous sheath of the flagellum. Expressed within the principal piece and midpiece of sperm tail (at protein level).</text>
</comment>
<comment type="developmental stage">
    <text evidence="9 10">Isoform HK1-SA: First expressed during meiosis and continues to be present in postmeiotic germ cells (PubMed:8396993, PubMed:9450953). Isoform HK1-SB: Present only in postmeiotic germ cells (PubMed:8396993).</text>
</comment>
<comment type="domain">
    <text evidence="2">The N- and C-terminal halves of this hexokinase contain a hexokinase domain. The catalytic activity is associated with the C-terminus while regulatory function is associated with the N-terminus. Each domain can bind a single D-glucose and D-glucose 6-phosphate molecule.</text>
</comment>
<comment type="PTM">
    <molecule>Isoform HK1-SC</molecule>
    <text evidence="10">Tyrosine-phosphorylated.</text>
</comment>
<comment type="miscellaneous">
    <molecule>Isoform HK1-SB</molecule>
    <text evidence="14">Produced by alternative splicing and alternative initiation at Met-53 of isoform HK1-SA.</text>
</comment>
<comment type="miscellaneous">
    <molecule>Isoform HK1-SC</molecule>
    <text evidence="14">Produced by alternative initiation at Met-53 of isoform HK1-SA.</text>
</comment>
<comment type="similarity">
    <text evidence="3 14">Belongs to the hexokinase family.</text>
</comment>
<protein>
    <recommendedName>
        <fullName evidence="14">Hexokinase-1</fullName>
        <ecNumber evidence="2">2.7.1.1</ecNumber>
    </recommendedName>
    <alternativeName>
        <fullName evidence="13">Hexokinase type I</fullName>
        <shortName evidence="13">HK I</shortName>
    </alternativeName>
    <alternativeName>
        <fullName evidence="11">Hexokinase, tumor isozyme</fullName>
    </alternativeName>
</protein>
<dbReference type="EC" id="2.7.1.1" evidence="2"/>
<dbReference type="EMBL" id="J05277">
    <property type="protein sequence ID" value="AAA37804.1"/>
    <property type="molecule type" value="mRNA"/>
</dbReference>
<dbReference type="EMBL" id="L16948">
    <property type="protein sequence ID" value="AAB57760.1"/>
    <property type="molecule type" value="mRNA"/>
</dbReference>
<dbReference type="EMBL" id="L16949">
    <property type="protein sequence ID" value="AAB57759.1"/>
    <property type="molecule type" value="mRNA"/>
</dbReference>
<dbReference type="EMBL" id="L16950">
    <property type="protein sequence ID" value="AAA53036.1"/>
    <property type="molecule type" value="mRNA"/>
</dbReference>
<dbReference type="EMBL" id="AC126428">
    <property type="status" value="NOT_ANNOTATED_CDS"/>
    <property type="molecule type" value="Genomic_DNA"/>
</dbReference>
<dbReference type="EMBL" id="AC145297">
    <property type="status" value="NOT_ANNOTATED_CDS"/>
    <property type="molecule type" value="Genomic_DNA"/>
</dbReference>
<dbReference type="CCDS" id="CCDS48577.1">
    <molecule id="P17710-3"/>
</dbReference>
<dbReference type="CCDS" id="CCDS48578.1">
    <molecule id="P17710-2"/>
</dbReference>
<dbReference type="PIR" id="A35244">
    <property type="entry name" value="A35244"/>
</dbReference>
<dbReference type="PIR" id="I49744">
    <property type="entry name" value="I49744"/>
</dbReference>
<dbReference type="RefSeq" id="NP_001139572.1">
    <molecule id="P17710-3"/>
    <property type="nucleotide sequence ID" value="NM_001146100.2"/>
</dbReference>
<dbReference type="RefSeq" id="NP_034568.2">
    <molecule id="P17710-2"/>
    <property type="nucleotide sequence ID" value="NM_010438.4"/>
</dbReference>
<dbReference type="RefSeq" id="XP_006513305.1">
    <molecule id="P17710-1"/>
    <property type="nucleotide sequence ID" value="XM_006513242.2"/>
</dbReference>
<dbReference type="RefSeq" id="XP_006513306.1">
    <molecule id="P17710-4"/>
    <property type="nucleotide sequence ID" value="XM_006513243.4"/>
</dbReference>
<dbReference type="RefSeq" id="XP_006513307.1">
    <molecule id="P17710-4"/>
    <property type="nucleotide sequence ID" value="XM_006513244.4"/>
</dbReference>
<dbReference type="RefSeq" id="XP_006513308.1">
    <molecule id="P17710-4"/>
    <property type="nucleotide sequence ID" value="XM_006513245.4"/>
</dbReference>
<dbReference type="SMR" id="P17710"/>
<dbReference type="BioGRID" id="200315">
    <property type="interactions" value="29"/>
</dbReference>
<dbReference type="FunCoup" id="P17710">
    <property type="interactions" value="755"/>
</dbReference>
<dbReference type="IntAct" id="P17710">
    <property type="interactions" value="7"/>
</dbReference>
<dbReference type="STRING" id="10090.ENSMUSP00000111946"/>
<dbReference type="MoonProt" id="P17710"/>
<dbReference type="GlyGen" id="P17710">
    <property type="glycosylation" value="2 sites, 1 N-linked glycan (1 site), 1 O-linked glycan (1 site)"/>
</dbReference>
<dbReference type="iPTMnet" id="P17710"/>
<dbReference type="PhosphoSitePlus" id="P17710"/>
<dbReference type="SwissPalm" id="P17710"/>
<dbReference type="jPOST" id="P17710"/>
<dbReference type="PaxDb" id="10090-ENSMUSP00000097282"/>
<dbReference type="PeptideAtlas" id="P17710"/>
<dbReference type="ProteomicsDB" id="273233">
    <molecule id="P17710-1"/>
</dbReference>
<dbReference type="ProteomicsDB" id="273234">
    <molecule id="P17710-2"/>
</dbReference>
<dbReference type="ProteomicsDB" id="273235">
    <molecule id="P17710-3"/>
</dbReference>
<dbReference type="ProteomicsDB" id="273236">
    <molecule id="P17710-4"/>
</dbReference>
<dbReference type="Pumba" id="P17710"/>
<dbReference type="Antibodypedia" id="2057">
    <property type="antibodies" value="870 antibodies from 42 providers"/>
</dbReference>
<dbReference type="DNASU" id="15275"/>
<dbReference type="Ensembl" id="ENSMUST00000072357.14">
    <molecule id="P17710-2"/>
    <property type="protein sequence ID" value="ENSMUSP00000072195.8"/>
    <property type="gene ID" value="ENSMUSG00000037012.19"/>
</dbReference>
<dbReference type="Ensembl" id="ENSMUST00000099691.11">
    <molecule id="P17710-3"/>
    <property type="protein sequence ID" value="ENSMUSP00000097282.5"/>
    <property type="gene ID" value="ENSMUSG00000037012.19"/>
</dbReference>
<dbReference type="Ensembl" id="ENSMUST00000116238.9">
    <molecule id="P17710-2"/>
    <property type="protein sequence ID" value="ENSMUSP00000111946.3"/>
    <property type="gene ID" value="ENSMUSG00000037012.19"/>
</dbReference>
<dbReference type="GeneID" id="15275"/>
<dbReference type="UCSC" id="uc007fgz.2">
    <molecule id="P17710-2"/>
    <property type="organism name" value="mouse"/>
</dbReference>
<dbReference type="AGR" id="MGI:96103"/>
<dbReference type="CTD" id="3098"/>
<dbReference type="MGI" id="MGI:96103">
    <property type="gene designation" value="Hk1"/>
</dbReference>
<dbReference type="VEuPathDB" id="HostDB:ENSMUSG00000037012"/>
<dbReference type="eggNOG" id="KOG1369">
    <property type="taxonomic scope" value="Eukaryota"/>
</dbReference>
<dbReference type="GeneTree" id="ENSGT00950000182787"/>
<dbReference type="HOGENOM" id="CLU_014393_1_0_1"/>
<dbReference type="InParanoid" id="P17710"/>
<dbReference type="OMA" id="XGILITW"/>
<dbReference type="TreeFam" id="TF314238"/>
<dbReference type="BRENDA" id="2.7.1.1">
    <property type="organism ID" value="3474"/>
</dbReference>
<dbReference type="Reactome" id="R-MMU-446205">
    <property type="pathway name" value="Synthesis of GDP-mannose"/>
</dbReference>
<dbReference type="Reactome" id="R-MMU-70171">
    <property type="pathway name" value="Glycolysis"/>
</dbReference>
<dbReference type="SABIO-RK" id="P17710"/>
<dbReference type="UniPathway" id="UPA00109">
    <property type="reaction ID" value="UER00180"/>
</dbReference>
<dbReference type="UniPathway" id="UPA00242"/>
<dbReference type="BioGRID-ORCS" id="15275">
    <property type="hits" value="5 hits in 80 CRISPR screens"/>
</dbReference>
<dbReference type="CD-CODE" id="CE726F99">
    <property type="entry name" value="Postsynaptic density"/>
</dbReference>
<dbReference type="ChiTaRS" id="Hk1">
    <property type="organism name" value="mouse"/>
</dbReference>
<dbReference type="PRO" id="PR:P17710"/>
<dbReference type="Proteomes" id="UP000000589">
    <property type="component" value="Chromosome 10"/>
</dbReference>
<dbReference type="RNAct" id="P17710">
    <property type="molecule type" value="protein"/>
</dbReference>
<dbReference type="Bgee" id="ENSMUSG00000037012">
    <property type="expression patterns" value="Expressed in retinal neural layer and 256 other cell types or tissues"/>
</dbReference>
<dbReference type="ExpressionAtlas" id="P17710">
    <property type="expression patterns" value="baseline and differential"/>
</dbReference>
<dbReference type="GO" id="GO:0005929">
    <property type="term" value="C:cilium"/>
    <property type="evidence" value="ECO:0000314"/>
    <property type="project" value="MGI"/>
</dbReference>
<dbReference type="GO" id="GO:0005829">
    <property type="term" value="C:cytosol"/>
    <property type="evidence" value="ECO:0000314"/>
    <property type="project" value="CAFA"/>
</dbReference>
<dbReference type="GO" id="GO:0045121">
    <property type="term" value="C:membrane raft"/>
    <property type="evidence" value="ECO:0000314"/>
    <property type="project" value="MGI"/>
</dbReference>
<dbReference type="GO" id="GO:0005741">
    <property type="term" value="C:mitochondrial outer membrane"/>
    <property type="evidence" value="ECO:0007669"/>
    <property type="project" value="UniProtKB-SubCell"/>
</dbReference>
<dbReference type="GO" id="GO:0005739">
    <property type="term" value="C:mitochondrion"/>
    <property type="evidence" value="ECO:0000314"/>
    <property type="project" value="CAFA"/>
</dbReference>
<dbReference type="GO" id="GO:0097228">
    <property type="term" value="C:sperm principal piece"/>
    <property type="evidence" value="ECO:0000314"/>
    <property type="project" value="MGI"/>
</dbReference>
<dbReference type="GO" id="GO:0005524">
    <property type="term" value="F:ATP binding"/>
    <property type="evidence" value="ECO:0007669"/>
    <property type="project" value="UniProtKB-KW"/>
</dbReference>
<dbReference type="GO" id="GO:0005536">
    <property type="term" value="F:D-glucose binding"/>
    <property type="evidence" value="ECO:0007669"/>
    <property type="project" value="InterPro"/>
</dbReference>
<dbReference type="GO" id="GO:0008865">
    <property type="term" value="F:fructokinase activity"/>
    <property type="evidence" value="ECO:0000250"/>
    <property type="project" value="UniProtKB"/>
</dbReference>
<dbReference type="GO" id="GO:0004340">
    <property type="term" value="F:glucokinase activity"/>
    <property type="evidence" value="ECO:0000314"/>
    <property type="project" value="MGI"/>
</dbReference>
<dbReference type="GO" id="GO:0047931">
    <property type="term" value="F:glucosamine kinase activity"/>
    <property type="evidence" value="ECO:0007669"/>
    <property type="project" value="RHEA"/>
</dbReference>
<dbReference type="GO" id="GO:0004396">
    <property type="term" value="F:hexokinase activity"/>
    <property type="evidence" value="ECO:0000314"/>
    <property type="project" value="MGI"/>
</dbReference>
<dbReference type="GO" id="GO:0019158">
    <property type="term" value="F:mannokinase activity"/>
    <property type="evidence" value="ECO:0000250"/>
    <property type="project" value="UniProtKB"/>
</dbReference>
<dbReference type="GO" id="GO:0042834">
    <property type="term" value="F:peptidoglycan binding"/>
    <property type="evidence" value="ECO:0000314"/>
    <property type="project" value="CAFA"/>
</dbReference>
<dbReference type="GO" id="GO:0061621">
    <property type="term" value="P:canonical glycolysis"/>
    <property type="evidence" value="ECO:0000314"/>
    <property type="project" value="MGI"/>
</dbReference>
<dbReference type="GO" id="GO:0046835">
    <property type="term" value="P:carbohydrate phosphorylation"/>
    <property type="evidence" value="ECO:0000315"/>
    <property type="project" value="CAFA"/>
</dbReference>
<dbReference type="GO" id="GO:0072655">
    <property type="term" value="P:establishment of protein localization to mitochondrion"/>
    <property type="evidence" value="ECO:0007669"/>
    <property type="project" value="Ensembl"/>
</dbReference>
<dbReference type="GO" id="GO:0006002">
    <property type="term" value="P:fructose 6-phosphate metabolic process"/>
    <property type="evidence" value="ECO:0000250"/>
    <property type="project" value="UniProtKB"/>
</dbReference>
<dbReference type="GO" id="GO:0061728">
    <property type="term" value="P:GDP-mannose biosynthetic process from mannose"/>
    <property type="evidence" value="ECO:0000314"/>
    <property type="project" value="MGI"/>
</dbReference>
<dbReference type="GO" id="GO:0051156">
    <property type="term" value="P:glucose 6-phosphate metabolic process"/>
    <property type="evidence" value="ECO:0000250"/>
    <property type="project" value="UniProtKB"/>
</dbReference>
<dbReference type="GO" id="GO:0006096">
    <property type="term" value="P:glycolytic process"/>
    <property type="evidence" value="ECO:0000304"/>
    <property type="project" value="MGI"/>
</dbReference>
<dbReference type="GO" id="GO:0006954">
    <property type="term" value="P:inflammatory response"/>
    <property type="evidence" value="ECO:0007669"/>
    <property type="project" value="UniProtKB-KW"/>
</dbReference>
<dbReference type="GO" id="GO:0045087">
    <property type="term" value="P:innate immune response"/>
    <property type="evidence" value="ECO:0007669"/>
    <property type="project" value="UniProtKB-KW"/>
</dbReference>
<dbReference type="GO" id="GO:0001678">
    <property type="term" value="P:intracellular glucose homeostasis"/>
    <property type="evidence" value="ECO:0007669"/>
    <property type="project" value="InterPro"/>
</dbReference>
<dbReference type="GO" id="GO:0072656">
    <property type="term" value="P:maintenance of protein location in mitochondrion"/>
    <property type="evidence" value="ECO:0007669"/>
    <property type="project" value="Ensembl"/>
</dbReference>
<dbReference type="GO" id="GO:0006013">
    <property type="term" value="P:mannose metabolic process"/>
    <property type="evidence" value="ECO:0000250"/>
    <property type="project" value="UniProtKB"/>
</dbReference>
<dbReference type="GO" id="GO:0002720">
    <property type="term" value="P:positive regulation of cytokine production involved in immune response"/>
    <property type="evidence" value="ECO:0000314"/>
    <property type="project" value="CAFA"/>
</dbReference>
<dbReference type="GO" id="GO:0032731">
    <property type="term" value="P:positive regulation of interleukin-1 beta production"/>
    <property type="evidence" value="ECO:0000314"/>
    <property type="project" value="CAFA"/>
</dbReference>
<dbReference type="CDD" id="cd24127">
    <property type="entry name" value="ASKHA_NBD_HK1_meta_rpt2"/>
    <property type="match status" value="1"/>
</dbReference>
<dbReference type="FunFam" id="3.30.420.40:FF:000015">
    <property type="entry name" value="Hexokinase 1"/>
    <property type="match status" value="2"/>
</dbReference>
<dbReference type="FunFam" id="3.40.367.20:FF:000001">
    <property type="entry name" value="Hexokinase 1"/>
    <property type="match status" value="1"/>
</dbReference>
<dbReference type="FunFam" id="3.40.367.20:FF:000020">
    <property type="entry name" value="Hexokinase-1"/>
    <property type="match status" value="1"/>
</dbReference>
<dbReference type="Gene3D" id="3.30.420.40">
    <property type="match status" value="2"/>
</dbReference>
<dbReference type="Gene3D" id="3.40.367.20">
    <property type="match status" value="2"/>
</dbReference>
<dbReference type="InterPro" id="IPR043129">
    <property type="entry name" value="ATPase_NBD"/>
</dbReference>
<dbReference type="InterPro" id="IPR001312">
    <property type="entry name" value="Hexokinase"/>
</dbReference>
<dbReference type="InterPro" id="IPR019807">
    <property type="entry name" value="Hexokinase_BS"/>
</dbReference>
<dbReference type="InterPro" id="IPR022673">
    <property type="entry name" value="Hexokinase_C"/>
</dbReference>
<dbReference type="InterPro" id="IPR022672">
    <property type="entry name" value="Hexokinase_N"/>
</dbReference>
<dbReference type="PANTHER" id="PTHR19443">
    <property type="entry name" value="HEXOKINASE"/>
    <property type="match status" value="1"/>
</dbReference>
<dbReference type="PANTHER" id="PTHR19443:SF80">
    <property type="entry name" value="HEXOKINASE-1"/>
    <property type="match status" value="1"/>
</dbReference>
<dbReference type="Pfam" id="PF00349">
    <property type="entry name" value="Hexokinase_1"/>
    <property type="match status" value="2"/>
</dbReference>
<dbReference type="Pfam" id="PF03727">
    <property type="entry name" value="Hexokinase_2"/>
    <property type="match status" value="2"/>
</dbReference>
<dbReference type="PRINTS" id="PR00475">
    <property type="entry name" value="HEXOKINASE"/>
</dbReference>
<dbReference type="SUPFAM" id="SSF53067">
    <property type="entry name" value="Actin-like ATPase domain"/>
    <property type="match status" value="4"/>
</dbReference>
<dbReference type="PROSITE" id="PS00378">
    <property type="entry name" value="HEXOKINASE_1"/>
    <property type="match status" value="2"/>
</dbReference>
<dbReference type="PROSITE" id="PS51748">
    <property type="entry name" value="HEXOKINASE_2"/>
    <property type="match status" value="2"/>
</dbReference>
<name>HXK1_MOUSE</name>
<evidence type="ECO:0000250" key="1">
    <source>
        <dbReference type="UniProtKB" id="P05708"/>
    </source>
</evidence>
<evidence type="ECO:0000250" key="2">
    <source>
        <dbReference type="UniProtKB" id="P19367"/>
    </source>
</evidence>
<evidence type="ECO:0000255" key="3">
    <source>
        <dbReference type="PROSITE-ProRule" id="PRU01084"/>
    </source>
</evidence>
<evidence type="ECO:0000256" key="4">
    <source>
        <dbReference type="SAM" id="MobiDB-lite"/>
    </source>
</evidence>
<evidence type="ECO:0000269" key="5">
    <source>
    </source>
</evidence>
<evidence type="ECO:0000269" key="6">
    <source>
    </source>
</evidence>
<evidence type="ECO:0000269" key="7">
    <source>
    </source>
</evidence>
<evidence type="ECO:0000269" key="8">
    <source>
    </source>
</evidence>
<evidence type="ECO:0000269" key="9">
    <source>
    </source>
</evidence>
<evidence type="ECO:0000269" key="10">
    <source>
    </source>
</evidence>
<evidence type="ECO:0000303" key="11">
    <source>
    </source>
</evidence>
<evidence type="ECO:0000303" key="12">
    <source>
    </source>
</evidence>
<evidence type="ECO:0000303" key="13">
    <source>
    </source>
</evidence>
<evidence type="ECO:0000305" key="14"/>
<evidence type="ECO:0000312" key="15">
    <source>
        <dbReference type="MGI" id="MGI:96103"/>
    </source>
</evidence>
<reference key="1">
    <citation type="journal article" date="1990" name="J. Biol. Chem.">
        <title>Glucose phosphorylation in tumor cells. Cloning, sequencing, and overexpression in active form of a full-length cDNA encoding a mitochondrial bindable form of hexokinase.</title>
        <authorList>
            <person name="Arora K.K."/>
            <person name="Fanciulli M."/>
            <person name="Pedersen P.L."/>
        </authorList>
    </citation>
    <scope>NUCLEOTIDE SEQUENCE [MRNA] (ISOFORM HK1)</scope>
</reference>
<reference key="2">
    <citation type="journal article" date="1993" name="Biol. Reprod.">
        <title>Unique hexokinase messenger ribonucleic acids lacking the porin-binding domain are developmentally expressed in mouse spermatogenic cells.</title>
        <authorList>
            <person name="Mori C."/>
            <person name="Welch J.E."/>
            <person name="Fulcher K.D."/>
            <person name="O'Brien D.A."/>
            <person name="Eddy E.M."/>
        </authorList>
    </citation>
    <scope>NUCLEOTIDE SEQUENCE [MRNA] (ISOFORMS HK1-SA; HK1-SB AND HK1-SC)</scope>
    <scope>DEVELOPMENTAL STAGE</scope>
    <source>
        <strain>CD-1</strain>
        <tissue>Testis</tissue>
    </source>
</reference>
<reference key="3">
    <citation type="journal article" date="2009" name="PLoS Biol.">
        <title>Lineage-specific biology revealed by a finished genome assembly of the mouse.</title>
        <authorList>
            <person name="Church D.M."/>
            <person name="Goodstadt L."/>
            <person name="Hillier L.W."/>
            <person name="Zody M.C."/>
            <person name="Goldstein S."/>
            <person name="She X."/>
            <person name="Bult C.J."/>
            <person name="Agarwala R."/>
            <person name="Cherry J.L."/>
            <person name="DiCuccio M."/>
            <person name="Hlavina W."/>
            <person name="Kapustin Y."/>
            <person name="Meric P."/>
            <person name="Maglott D."/>
            <person name="Birtle Z."/>
            <person name="Marques A.C."/>
            <person name="Graves T."/>
            <person name="Zhou S."/>
            <person name="Teague B."/>
            <person name="Potamousis K."/>
            <person name="Churas C."/>
            <person name="Place M."/>
            <person name="Herschleb J."/>
            <person name="Runnheim R."/>
            <person name="Forrest D."/>
            <person name="Amos-Landgraf J."/>
            <person name="Schwartz D.C."/>
            <person name="Cheng Z."/>
            <person name="Lindblad-Toh K."/>
            <person name="Eichler E.E."/>
            <person name="Ponting C.P."/>
        </authorList>
    </citation>
    <scope>NUCLEOTIDE SEQUENCE [LARGE SCALE GENOMIC DNA]</scope>
    <source>
        <strain>C57BL/6J</strain>
    </source>
</reference>
<reference key="4">
    <citation type="submission" date="2007-04" db="UniProtKB">
        <authorList>
            <person name="Lubec G."/>
            <person name="Kang S.U."/>
        </authorList>
    </citation>
    <scope>PROTEIN SEQUENCE OF 81-98; 110-118; 134-147; 203-215; 219-229; 233-243; 300-310; 352-363; 372-409; 415-437; 438-452; 464-474; 489-518; 538-544; 549-595; 652-663; 681-694; 784-794; 800-819; 826-833; 842-884; 906-922 AND 942-974</scope>
    <source>
        <strain>C57BL/6J</strain>
        <tissue>Brain</tissue>
    </source>
</reference>
<reference key="5">
    <citation type="journal article" date="1998" name="Mol. Biol. Cell">
        <title>Targeting of a germ cell-specific type 1 hexokinase lacking a porin-binding domain to the mitochondria as well as to the head and fibrous sheath of murine spermatozoa.</title>
        <authorList>
            <person name="Travis A.J."/>
            <person name="Foster J.A."/>
            <person name="Rosenbaum N.A."/>
            <person name="Visconti P.E."/>
            <person name="Gerton G.L."/>
            <person name="Kopf G.S."/>
            <person name="Moss S.B."/>
        </authorList>
    </citation>
    <scope>SUBCELLULAR LOCATION</scope>
    <scope>DEVELOPMENTAL STAGE</scope>
    <scope>PHOSPHORYLATION</scope>
</reference>
<reference key="6">
    <citation type="journal article" date="1999" name="J. Biol. Chem.">
        <title>A novel NH(2)-terminal, nonhydrophobic motif targets a male germ cell-specific hexokinase to the endoplasmic reticulum and plasma membrane.</title>
        <authorList>
            <person name="Travis A.J."/>
            <person name="Sui D."/>
            <person name="Riedel K.D."/>
            <person name="Hofmann N.R."/>
            <person name="Moss S.B."/>
            <person name="Wilson J.E."/>
            <person name="Kopf G.S."/>
        </authorList>
    </citation>
    <scope>MUTAGENESIS OF PRO-67; LYS-68; ARG-70; LEU-73; THR-74 AND GLU-75</scope>
</reference>
<reference key="7">
    <citation type="journal article" date="2010" name="Biol. Reprod.">
        <title>Molecular complex of three testis-specific isozymes associated with the mouse sperm fibrous sheath: hexokinase 1, phosphofructokinase M, and glutathione S-transferase mu class 5.</title>
        <authorList>
            <person name="Nakamura N."/>
            <person name="Mori C."/>
            <person name="Eddy E.M."/>
        </authorList>
    </citation>
    <scope>INTERACTION WITH PFKM</scope>
</reference>
<reference key="8">
    <citation type="journal article" date="2010" name="Cell">
        <title>A tissue-specific atlas of mouse protein phosphorylation and expression.</title>
        <authorList>
            <person name="Huttlin E.L."/>
            <person name="Jedrychowski M.P."/>
            <person name="Elias J.E."/>
            <person name="Goswami T."/>
            <person name="Rad R."/>
            <person name="Beausoleil S.A."/>
            <person name="Villen J."/>
            <person name="Haas W."/>
            <person name="Sowa M.E."/>
            <person name="Gygi S.P."/>
        </authorList>
    </citation>
    <scope>IDENTIFICATION BY MASS SPECTROMETRY [LARGE SCALE ANALYSIS]</scope>
    <source>
        <tissue>Brain</tissue>
        <tissue>Brown adipose tissue</tissue>
        <tissue>Heart</tissue>
        <tissue>Kidney</tissue>
        <tissue>Liver</tissue>
        <tissue>Lung</tissue>
        <tissue>Pancreas</tissue>
        <tissue>Spleen</tissue>
        <tissue>Testis</tissue>
    </source>
</reference>
<reference key="9">
    <citation type="journal article" date="2012" name="PLoS Genet.">
        <title>RAB-like 2 has an essential role in male fertility, sperm intra-flagellar transport, and tail assembly.</title>
        <authorList>
            <person name="Lo J.C."/>
            <person name="Jamsai D."/>
            <person name="O'Connor A.E."/>
            <person name="Borg C."/>
            <person name="Clark B.J."/>
            <person name="Whisstock J.C."/>
            <person name="Field M.C."/>
            <person name="Adams V."/>
            <person name="Ishikawa T."/>
            <person name="Aitken R.J."/>
            <person name="Whittle B."/>
            <person name="Goodnow C.C."/>
            <person name="Ormandy C.J."/>
            <person name="O'Bryan M.K."/>
        </authorList>
    </citation>
    <scope>INTERACTION WITH RABL2</scope>
    <scope>TISSUE SPECIFICITY</scope>
</reference>
<reference key="10">
    <citation type="journal article" date="2016" name="Cell">
        <title>Hexokinase is an innate immune receptor for the detection of bacterial peptidoglycan.</title>
        <authorList>
            <person name="Wolf A.J."/>
            <person name="Reyes C.N."/>
            <person name="Liang W."/>
            <person name="Becker C."/>
            <person name="Shimada K."/>
            <person name="Wheeler M.L."/>
            <person name="Cho H.C."/>
            <person name="Popescu N.I."/>
            <person name="Coggeshall K.M."/>
            <person name="Arditi M."/>
            <person name="Underhill D.M."/>
        </authorList>
    </citation>
    <scope>FUNCTION</scope>
    <scope>SUBCELLULAR LOCATION</scope>
</reference>
<sequence>MGWGAPLLSRMLHGPGQAGETSPVPERQSGSENPASEDRRPLEKQCSHHLYTMGQNCQRGQAVDVEPKIRPPLTEEKIDKYLYAMRLSDEILIDILTRFKKEMKNGLSRDYNPTASVKMLPTFVRSIPDGSEKGDFIALDLGGSSFRILRVQVNHEKSQNVSMESEVYDTPENIVHGSGSQLFDHVAECLGDFMEKRKIKDKKLPVGFTFSFPCRQSKIDEAVLITWTKRFKASGVEGADVVKLLNKAIKKRGDYDANIVAVVNDTVGTMMTCGYDDQQCEVGLIIGTGTNACYMEELRHIDLVEGDEGRMCINTEWGAFGDDGSLEDIRTEFDRELDRGSLNPGKQLFEKMVSGMYMGELVRLILVKMAKESLLFEGRITPELLTRGKFTTSDVAAIETDKEGVQNAKEILTRLGVEPSHDDCVSVQHVCTIVSFRSANLVAATLGAILNRLRDNKGTPRLRTTVGVDGSLYKMHPQYSRRFHKTLRRLVPDSDVRFLLSESGSGKGAAMVTAVAYRLAEQHRQIEETLSHFRLSKQALMEVKKKLRSEMEMGLRKETNSRATVKMLPSYVRSIPDGTEHGDFLALDLGGTNFRVLLVKIRSGKKRTVEMHNKIYSIPLEIMQGTGDELFDHIVSCISDFLDYMGIKGPRMPLGFTFSFPCKQTSLDCGILITWTKGFKATDCVGHDVATLLRDAVKRREEFDLDVVAVVNDTVGTMMTCAYEEPSCEIGLIVGTGSNACYMEEMKNVEMVEGNQGQMCINMEWGAFGDNGCLDDIRTDFDKVVDEYSLNSGKQRFEKMISGMYLGEIVRNILIDFTKKGFLFRGQISEPLKTRGIFETKFLSQIESDRLALLQVRAILQQLGLNSTCDDSILVKTVCGVVSKRAAQLCGAGMAAVVEKIRENRGLDHLNVTVGVDGTLYKLHPHFSRIMHQTVKELSPKCTVSFLLSEDGSGKGAALITAVGVRLRGDPTNA</sequence>
<accession>P17710</accession>
<accession>E9PXQ3</accession>
<accession>Q61659</accession>
<accession>Q64476</accession>
<accession>Q64479</accession>
<feature type="chain" id="PRO_0000013399" description="Hexokinase-1">
    <location>
        <begin position="1"/>
        <end position="974"/>
    </location>
</feature>
<feature type="domain" description="Hexokinase 1" evidence="3">
    <location>
        <begin position="72"/>
        <end position="514"/>
    </location>
</feature>
<feature type="domain" description="Hexokinase 2" evidence="3">
    <location>
        <begin position="520"/>
        <end position="962"/>
    </location>
</feature>
<feature type="region of interest" description="Disordered" evidence="4">
    <location>
        <begin position="1"/>
        <end position="42"/>
    </location>
</feature>
<feature type="region of interest" description="Mitochondrial-binding peptide (MBP)" evidence="2">
    <location>
        <begin position="57"/>
        <end position="66"/>
    </location>
</feature>
<feature type="region of interest" description="Hexokinase small subdomain 1" evidence="3">
    <location>
        <begin position="129"/>
        <end position="263"/>
    </location>
</feature>
<feature type="region of interest" description="Hexokinase large subdomain 1" evidence="3">
    <location>
        <begin position="264"/>
        <end position="503"/>
    </location>
</feature>
<feature type="region of interest" description="Hexokinase small subdomain 2" evidence="3">
    <location>
        <begin position="577"/>
        <end position="711"/>
    </location>
</feature>
<feature type="region of interest" description="Hexokinase large subdomain 2" evidence="3">
    <location>
        <begin position="712"/>
        <end position="951"/>
    </location>
</feature>
<feature type="binding site" evidence="2">
    <location>
        <position position="86"/>
    </location>
    <ligand>
        <name>ATP</name>
        <dbReference type="ChEBI" id="CHEBI:30616"/>
        <label>1</label>
    </ligand>
</feature>
<feature type="binding site" evidence="2">
    <location>
        <begin position="140"/>
        <end position="147"/>
    </location>
    <ligand>
        <name>D-glucose 6-phosphate</name>
        <dbReference type="ChEBI" id="CHEBI:61548"/>
        <label>1</label>
    </ligand>
</feature>
<feature type="binding site" evidence="2">
    <location>
        <begin position="140"/>
        <end position="145"/>
    </location>
    <ligand>
        <name>ATP</name>
        <dbReference type="ChEBI" id="CHEBI:30616"/>
        <label>1</label>
    </ligand>
</feature>
<feature type="binding site" evidence="2">
    <location>
        <position position="211"/>
    </location>
    <ligand>
        <name>D-glucose</name>
        <dbReference type="ChEBI" id="CHEBI:4167"/>
        <label>1</label>
    </ligand>
</feature>
<feature type="binding site" evidence="2">
    <location>
        <begin position="228"/>
        <end position="229"/>
    </location>
    <ligand>
        <name>D-glucose</name>
        <dbReference type="ChEBI" id="CHEBI:4167"/>
        <label>1</label>
    </ligand>
</feature>
<feature type="binding site" evidence="2">
    <location>
        <begin position="264"/>
        <end position="265"/>
    </location>
    <ligand>
        <name>D-glucose</name>
        <dbReference type="ChEBI" id="CHEBI:4167"/>
        <label>1</label>
    </ligand>
</feature>
<feature type="binding site" evidence="2">
    <location>
        <position position="265"/>
    </location>
    <ligand>
        <name>D-glucose 6-phosphate</name>
        <dbReference type="ChEBI" id="CHEBI:61548"/>
        <label>1</label>
    </ligand>
</feature>
<feature type="binding site" evidence="2">
    <location>
        <position position="288"/>
    </location>
    <ligand>
        <name>D-glucose 6-phosphate</name>
        <dbReference type="ChEBI" id="CHEBI:61548"/>
        <label>1</label>
    </ligand>
</feature>
<feature type="binding site" evidence="2">
    <location>
        <position position="291"/>
    </location>
    <ligand>
        <name>D-glucose</name>
        <dbReference type="ChEBI" id="CHEBI:4167"/>
        <label>1</label>
    </ligand>
</feature>
<feature type="binding site" evidence="2">
    <location>
        <position position="316"/>
    </location>
    <ligand>
        <name>D-glucose</name>
        <dbReference type="ChEBI" id="CHEBI:4167"/>
        <label>1</label>
    </ligand>
</feature>
<feature type="binding site" evidence="2">
    <location>
        <begin position="347"/>
        <end position="350"/>
    </location>
    <ligand>
        <name>D-glucose</name>
        <dbReference type="ChEBI" id="CHEBI:4167"/>
        <label>1</label>
    </ligand>
</feature>
<feature type="binding site" evidence="2">
    <location>
        <begin position="469"/>
        <end position="471"/>
    </location>
    <ligand>
        <name>D-glucose 6-phosphate</name>
        <dbReference type="ChEBI" id="CHEBI:61548"/>
        <label>1</label>
    </ligand>
</feature>
<feature type="binding site" evidence="2">
    <location>
        <begin position="481"/>
        <end position="482"/>
    </location>
    <ligand>
        <name>ATP</name>
        <dbReference type="ChEBI" id="CHEBI:30616"/>
        <label>1</label>
    </ligand>
</feature>
<feature type="binding site" evidence="2">
    <location>
        <position position="505"/>
    </location>
    <ligand>
        <name>D-glucose 6-phosphate</name>
        <dbReference type="ChEBI" id="CHEBI:61548"/>
        <label>1</label>
    </ligand>
</feature>
<feature type="binding site" evidence="2">
    <location>
        <begin position="588"/>
        <end position="593"/>
    </location>
    <ligand>
        <name>ATP</name>
        <dbReference type="ChEBI" id="CHEBI:30616"/>
        <label>2</label>
    </ligand>
</feature>
<feature type="binding site" evidence="2">
    <location>
        <begin position="588"/>
        <end position="592"/>
    </location>
    <ligand>
        <name>D-glucose 6-phosphate</name>
        <dbReference type="ChEBI" id="CHEBI:61548"/>
        <label>2</label>
    </ligand>
</feature>
<feature type="binding site" evidence="2">
    <location>
        <begin position="659"/>
        <end position="660"/>
    </location>
    <ligand>
        <name>D-glucose</name>
        <dbReference type="ChEBI" id="CHEBI:4167"/>
        <label>2</label>
    </ligand>
</feature>
<feature type="binding site" evidence="2">
    <location>
        <begin position="676"/>
        <end position="677"/>
    </location>
    <ligand>
        <name>D-glucose</name>
        <dbReference type="ChEBI" id="CHEBI:4167"/>
        <label>2</label>
    </ligand>
</feature>
<feature type="binding site" evidence="2">
    <location>
        <begin position="712"/>
        <end position="713"/>
    </location>
    <ligand>
        <name>D-glucose</name>
        <dbReference type="ChEBI" id="CHEBI:4167"/>
        <label>2</label>
    </ligand>
</feature>
<feature type="binding site" evidence="2">
    <location>
        <position position="713"/>
    </location>
    <ligand>
        <name>D-glucose 6-phosphate</name>
        <dbReference type="ChEBI" id="CHEBI:61548"/>
        <label>2</label>
    </ligand>
</feature>
<feature type="binding site" evidence="2">
    <location>
        <position position="736"/>
    </location>
    <ligand>
        <name>ATP</name>
        <dbReference type="ChEBI" id="CHEBI:30616"/>
        <label>2</label>
    </ligand>
</feature>
<feature type="binding site" evidence="2">
    <location>
        <position position="736"/>
    </location>
    <ligand>
        <name>D-glucose 6-phosphate</name>
        <dbReference type="ChEBI" id="CHEBI:61548"/>
        <label>2</label>
    </ligand>
</feature>
<feature type="binding site" evidence="2">
    <location>
        <begin position="738"/>
        <end position="739"/>
    </location>
    <ligand>
        <name>D-glucose</name>
        <dbReference type="ChEBI" id="CHEBI:4167"/>
        <label>2</label>
    </ligand>
</feature>
<feature type="binding site" evidence="2">
    <location>
        <position position="764"/>
    </location>
    <ligand>
        <name>D-glucose</name>
        <dbReference type="ChEBI" id="CHEBI:4167"/>
        <label>2</label>
    </ligand>
</feature>
<feature type="binding site" evidence="2">
    <location>
        <position position="798"/>
    </location>
    <ligand>
        <name>D-glucose</name>
        <dbReference type="ChEBI" id="CHEBI:4167"/>
        <label>2</label>
    </ligand>
</feature>
<feature type="binding site" evidence="2">
    <location>
        <begin position="803"/>
        <end position="804"/>
    </location>
    <ligand>
        <name>ATP</name>
        <dbReference type="ChEBI" id="CHEBI:30616"/>
        <label>2</label>
    </ligand>
</feature>
<feature type="binding site" evidence="2">
    <location>
        <begin position="840"/>
        <end position="844"/>
    </location>
    <ligand>
        <name>ATP</name>
        <dbReference type="ChEBI" id="CHEBI:30616"/>
        <label>2</label>
    </ligand>
</feature>
<feature type="binding site" evidence="2">
    <location>
        <begin position="917"/>
        <end position="919"/>
    </location>
    <ligand>
        <name>D-glucose 6-phosphate</name>
        <dbReference type="ChEBI" id="CHEBI:61548"/>
        <label>2</label>
    </ligand>
</feature>
<feature type="binding site" evidence="2">
    <location>
        <begin position="919"/>
        <end position="923"/>
    </location>
    <ligand>
        <name>ATP</name>
        <dbReference type="ChEBI" id="CHEBI:30616"/>
        <label>2</label>
    </ligand>
</feature>
<feature type="binding site" evidence="2">
    <location>
        <position position="953"/>
    </location>
    <ligand>
        <name>D-glucose 6-phosphate</name>
        <dbReference type="ChEBI" id="CHEBI:61548"/>
        <label>2</label>
    </ligand>
</feature>
<feature type="modified residue" description="Phosphoserine" evidence="1">
    <location>
        <position position="393"/>
    </location>
</feature>
<feature type="splice variant" id="VSP_007327" description="In isoform HK1." evidence="11">
    <original>MGWGAPLLSRMLHGPGQAGETSPVPERQSGSENPASEDRRPLEKQCSHHLYTMGQNCQRGQAVDVEPKIRPPLTEE</original>
    <variation>MIAAQLLAYYFTELKDDQVK</variation>
    <location>
        <begin position="1"/>
        <end position="76"/>
    </location>
</feature>
<feature type="splice variant" id="VSP_018747" description="In isoform HK1-SB and isoform HK1-SC." evidence="12">
    <location>
        <begin position="1"/>
        <end position="52"/>
    </location>
</feature>
<feature type="splice variant" id="VSP_007328" description="In isoform HK1-SB." evidence="12">
    <original>T</original>
    <variation>TGWELSPDRRWYQAYMRCTQDTHR</variation>
    <location>
        <position position="400"/>
    </location>
</feature>
<feature type="mutagenesis site" description="Disrupts targeting to membrane; when associated with N-68; Q-70; P-73; A-74 and Q-75." evidence="5">
    <original>P</original>
    <variation>A</variation>
    <location>
        <position position="67"/>
    </location>
</feature>
<feature type="mutagenesis site" description="Disrupts targeting to membrane; when associated with A-67; Q-70; P-73; A-74 and Q-75." evidence="5">
    <original>K</original>
    <variation>N</variation>
    <location>
        <position position="68"/>
    </location>
</feature>
<feature type="mutagenesis site" description="Disrupts targeting to membrane; when associated with A-67; N-68; P-73; A-74 and Q-75." evidence="5">
    <original>R</original>
    <variation>Q</variation>
    <location>
        <position position="70"/>
    </location>
</feature>
<feature type="mutagenesis site" description="Disrupts targeting to membrane; when associated with A-67; N-68; Q-70; A-74 and Q-75." evidence="5">
    <original>L</original>
    <variation>P</variation>
    <location>
        <position position="73"/>
    </location>
</feature>
<feature type="mutagenesis site" description="Disrupts targeting to membrane; when associated with A-67; N-68; Q-70; P-73 and Q-75." evidence="5">
    <original>T</original>
    <variation>A</variation>
    <location>
        <position position="74"/>
    </location>
</feature>
<feature type="mutagenesis site" description="Disrupts targeting to membrane; when associated with A-67; N-68; Q-70; P-73 and A-74." evidence="5">
    <original>E</original>
    <variation>Q</variation>
    <location>
        <position position="75"/>
    </location>
</feature>
<feature type="sequence conflict" description="In Ref. 1; AAA37804." evidence="14" ref="1">
    <original>D</original>
    <variation>S</variation>
    <location>
        <position position="870"/>
    </location>
</feature>
<feature type="sequence conflict" description="In Ref. 2; AAB57759." evidence="14" ref="2">
    <original>E</original>
    <variation>Q</variation>
    <location>
        <position position="899"/>
    </location>
</feature>
<organism>
    <name type="scientific">Mus musculus</name>
    <name type="common">Mouse</name>
    <dbReference type="NCBI Taxonomy" id="10090"/>
    <lineage>
        <taxon>Eukaryota</taxon>
        <taxon>Metazoa</taxon>
        <taxon>Chordata</taxon>
        <taxon>Craniata</taxon>
        <taxon>Vertebrata</taxon>
        <taxon>Euteleostomi</taxon>
        <taxon>Mammalia</taxon>
        <taxon>Eutheria</taxon>
        <taxon>Euarchontoglires</taxon>
        <taxon>Glires</taxon>
        <taxon>Rodentia</taxon>
        <taxon>Myomorpha</taxon>
        <taxon>Muroidea</taxon>
        <taxon>Muridae</taxon>
        <taxon>Murinae</taxon>
        <taxon>Mus</taxon>
        <taxon>Mus</taxon>
    </lineage>
</organism>
<gene>
    <name evidence="15" type="primary">Hk1</name>
</gene>